<reference key="1">
    <citation type="journal article" date="2000" name="J. Biol. Chem.">
        <title>Identification and characterization of Elongin A2, a new member of the Elongin family of transcription elongation factors, specifically expressed in the testis.</title>
        <authorList>
            <person name="Aso T."/>
            <person name="Yamazaki K."/>
            <person name="Amimoto K."/>
            <person name="Kuroiwa A."/>
            <person name="Higashi H."/>
            <person name="Matsuda Y."/>
            <person name="Kitajima S."/>
            <person name="Hatakeyama M."/>
        </authorList>
    </citation>
    <scope>NUCLEOTIDE SEQUENCE [MRNA]</scope>
    <scope>FUNCTION</scope>
    <scope>SUBUNIT</scope>
    <scope>TISSUE SPECIFICITY</scope>
    <scope>VARIANTS PRO-179; PHE-254; SER-403 AND THR-446</scope>
    <source>
        <tissue>Testis</tissue>
    </source>
</reference>
<reference key="2">
    <citation type="journal article" date="2004" name="Genome Res.">
        <title>The status, quality, and expansion of the NIH full-length cDNA project: the Mammalian Gene Collection (MGC).</title>
        <authorList>
            <consortium name="The MGC Project Team"/>
        </authorList>
    </citation>
    <scope>NUCLEOTIDE SEQUENCE [LARGE SCALE MRNA]</scope>
    <source>
        <tissue>Testis</tissue>
    </source>
</reference>
<reference key="3">
    <citation type="journal article" date="2006" name="Science">
        <title>The consensus coding sequences of human breast and colorectal cancers.</title>
        <authorList>
            <person name="Sjoeblom T."/>
            <person name="Jones S."/>
            <person name="Wood L.D."/>
            <person name="Parsons D.W."/>
            <person name="Lin J."/>
            <person name="Barber T.D."/>
            <person name="Mandelker D."/>
            <person name="Leary R.J."/>
            <person name="Ptak J."/>
            <person name="Silliman N."/>
            <person name="Szabo S."/>
            <person name="Buckhaults P."/>
            <person name="Farrell C."/>
            <person name="Meeh P."/>
            <person name="Markowitz S.D."/>
            <person name="Willis J."/>
            <person name="Dawson D."/>
            <person name="Willson J.K.V."/>
            <person name="Gazdar A.F."/>
            <person name="Hartigan J."/>
            <person name="Wu L."/>
            <person name="Liu C."/>
            <person name="Parmigiani G."/>
            <person name="Park B.H."/>
            <person name="Bachman K.E."/>
            <person name="Papadopoulos N."/>
            <person name="Vogelstein B."/>
            <person name="Kinzler K.W."/>
            <person name="Velculescu V.E."/>
        </authorList>
    </citation>
    <scope>VARIANT [LARGE SCALE ANALYSIS] GLN-498</scope>
</reference>
<accession>Q8IYF1</accession>
<accession>Q9P2V9</accession>
<organism>
    <name type="scientific">Homo sapiens</name>
    <name type="common">Human</name>
    <dbReference type="NCBI Taxonomy" id="9606"/>
    <lineage>
        <taxon>Eukaryota</taxon>
        <taxon>Metazoa</taxon>
        <taxon>Chordata</taxon>
        <taxon>Craniata</taxon>
        <taxon>Vertebrata</taxon>
        <taxon>Euteleostomi</taxon>
        <taxon>Mammalia</taxon>
        <taxon>Eutheria</taxon>
        <taxon>Euarchontoglires</taxon>
        <taxon>Primates</taxon>
        <taxon>Haplorrhini</taxon>
        <taxon>Catarrhini</taxon>
        <taxon>Hominidae</taxon>
        <taxon>Homo</taxon>
    </lineage>
</organism>
<name>ELOA2_HUMAN</name>
<dbReference type="EMBL" id="AB030834">
    <property type="protein sequence ID" value="BAA90665.1"/>
    <property type="molecule type" value="mRNA"/>
</dbReference>
<dbReference type="EMBL" id="BC036022">
    <property type="protein sequence ID" value="AAH36022.1"/>
    <property type="molecule type" value="mRNA"/>
</dbReference>
<dbReference type="CCDS" id="CCDS11932.1"/>
<dbReference type="RefSeq" id="NP_057511.2">
    <property type="nucleotide sequence ID" value="NM_016427.2"/>
</dbReference>
<dbReference type="SMR" id="Q8IYF1"/>
<dbReference type="BioGRID" id="119388">
    <property type="interactions" value="67"/>
</dbReference>
<dbReference type="FunCoup" id="Q8IYF1">
    <property type="interactions" value="331"/>
</dbReference>
<dbReference type="IntAct" id="Q8IYF1">
    <property type="interactions" value="59"/>
</dbReference>
<dbReference type="STRING" id="9606.ENSP00000331302"/>
<dbReference type="GlyGen" id="Q8IYF1">
    <property type="glycosylation" value="4 sites, 2 O-linked glycans (4 sites)"/>
</dbReference>
<dbReference type="iPTMnet" id="Q8IYF1"/>
<dbReference type="PhosphoSitePlus" id="Q8IYF1"/>
<dbReference type="BioMuta" id="ELOA2"/>
<dbReference type="DMDM" id="145559470"/>
<dbReference type="MassIVE" id="Q8IYF1"/>
<dbReference type="PaxDb" id="9606-ENSP00000331302"/>
<dbReference type="PeptideAtlas" id="Q8IYF1"/>
<dbReference type="ProteomicsDB" id="71165"/>
<dbReference type="Antibodypedia" id="22536">
    <property type="antibodies" value="75 antibodies from 19 providers"/>
</dbReference>
<dbReference type="DNASU" id="51224"/>
<dbReference type="Ensembl" id="ENST00000332567.6">
    <property type="protein sequence ID" value="ENSP00000331302.4"/>
    <property type="gene ID" value="ENSG00000206181.7"/>
</dbReference>
<dbReference type="GeneID" id="51224"/>
<dbReference type="KEGG" id="hsa:51224"/>
<dbReference type="MANE-Select" id="ENST00000332567.6">
    <property type="protein sequence ID" value="ENSP00000331302.4"/>
    <property type="RefSeq nucleotide sequence ID" value="NM_016427.3"/>
    <property type="RefSeq protein sequence ID" value="NP_057511.2"/>
</dbReference>
<dbReference type="UCSC" id="uc002lcr.2">
    <property type="organism name" value="human"/>
</dbReference>
<dbReference type="AGR" id="HGNC:30771"/>
<dbReference type="CTD" id="51224"/>
<dbReference type="DisGeNET" id="51224"/>
<dbReference type="GeneCards" id="ELOA2"/>
<dbReference type="HGNC" id="HGNC:30771">
    <property type="gene designation" value="ELOA2"/>
</dbReference>
<dbReference type="HPA" id="ENSG00000206181">
    <property type="expression patterns" value="Tissue enriched (testis)"/>
</dbReference>
<dbReference type="MIM" id="609522">
    <property type="type" value="gene"/>
</dbReference>
<dbReference type="neXtProt" id="NX_Q8IYF1"/>
<dbReference type="OpenTargets" id="ENSG00000206181"/>
<dbReference type="PharmGKB" id="PA134932220"/>
<dbReference type="VEuPathDB" id="HostDB:ENSG00000206181"/>
<dbReference type="eggNOG" id="KOG2821">
    <property type="taxonomic scope" value="Eukaryota"/>
</dbReference>
<dbReference type="GeneTree" id="ENSGT00390000002428"/>
<dbReference type="HOGENOM" id="CLU_021679_1_0_1"/>
<dbReference type="InParanoid" id="Q8IYF1"/>
<dbReference type="OMA" id="IESKHDY"/>
<dbReference type="OrthoDB" id="9485492at2759"/>
<dbReference type="PAN-GO" id="Q8IYF1">
    <property type="GO annotations" value="0 GO annotations based on evolutionary models"/>
</dbReference>
<dbReference type="PhylomeDB" id="Q8IYF1"/>
<dbReference type="TreeFam" id="TF317259"/>
<dbReference type="PathwayCommons" id="Q8IYF1"/>
<dbReference type="Reactome" id="R-HSA-112382">
    <property type="pathway name" value="Formation of RNA Pol II elongation complex"/>
</dbReference>
<dbReference type="Reactome" id="R-HSA-167152">
    <property type="pathway name" value="Formation of HIV elongation complex in the absence of HIV Tat"/>
</dbReference>
<dbReference type="Reactome" id="R-HSA-167200">
    <property type="pathway name" value="Formation of HIV-1 elongation complex containing HIV-1 Tat"/>
</dbReference>
<dbReference type="Reactome" id="R-HSA-167238">
    <property type="pathway name" value="Pausing and recovery of Tat-mediated HIV elongation"/>
</dbReference>
<dbReference type="Reactome" id="R-HSA-167243">
    <property type="pathway name" value="Tat-mediated HIV elongation arrest and recovery"/>
</dbReference>
<dbReference type="Reactome" id="R-HSA-167246">
    <property type="pathway name" value="Tat-mediated elongation of the HIV-1 transcript"/>
</dbReference>
<dbReference type="Reactome" id="R-HSA-167287">
    <property type="pathway name" value="HIV elongation arrest and recovery"/>
</dbReference>
<dbReference type="Reactome" id="R-HSA-167290">
    <property type="pathway name" value="Pausing and recovery of HIV elongation"/>
</dbReference>
<dbReference type="Reactome" id="R-HSA-674695">
    <property type="pathway name" value="RNA Polymerase II Pre-transcription Events"/>
</dbReference>
<dbReference type="Reactome" id="R-HSA-6796648">
    <property type="pathway name" value="TP53 Regulates Transcription of DNA Repair Genes"/>
</dbReference>
<dbReference type="Reactome" id="R-HSA-75955">
    <property type="pathway name" value="RNA Polymerase II Transcription Elongation"/>
</dbReference>
<dbReference type="SignaLink" id="Q8IYF1"/>
<dbReference type="BioGRID-ORCS" id="51224">
    <property type="hits" value="10 hits in 1134 CRISPR screens"/>
</dbReference>
<dbReference type="CD-CODE" id="804901D1">
    <property type="entry name" value="Nuclear speckle"/>
</dbReference>
<dbReference type="CD-CODE" id="91857CE7">
    <property type="entry name" value="Nucleolus"/>
</dbReference>
<dbReference type="GenomeRNAi" id="51224"/>
<dbReference type="Pharos" id="Q8IYF1">
    <property type="development level" value="Tdark"/>
</dbReference>
<dbReference type="PRO" id="PR:Q8IYF1"/>
<dbReference type="Proteomes" id="UP000005640">
    <property type="component" value="Chromosome 18"/>
</dbReference>
<dbReference type="RNAct" id="Q8IYF1">
    <property type="molecule type" value="protein"/>
</dbReference>
<dbReference type="Bgee" id="ENSG00000206181">
    <property type="expression patterns" value="Expressed in male germ line stem cell (sensu Vertebrata) in testis and 6 other cell types or tissues"/>
</dbReference>
<dbReference type="GO" id="GO:0070449">
    <property type="term" value="C:elongin complex"/>
    <property type="evidence" value="ECO:0007669"/>
    <property type="project" value="InterPro"/>
</dbReference>
<dbReference type="GO" id="GO:0005654">
    <property type="term" value="C:nucleoplasm"/>
    <property type="evidence" value="ECO:0000304"/>
    <property type="project" value="Reactome"/>
</dbReference>
<dbReference type="GO" id="GO:0032784">
    <property type="term" value="P:regulation of DNA-templated transcription elongation"/>
    <property type="evidence" value="ECO:0000304"/>
    <property type="project" value="ProtInc"/>
</dbReference>
<dbReference type="GO" id="GO:0006366">
    <property type="term" value="P:transcription by RNA polymerase II"/>
    <property type="evidence" value="ECO:0000304"/>
    <property type="project" value="ProtInc"/>
</dbReference>
<dbReference type="GO" id="GO:0006368">
    <property type="term" value="P:transcription elongation by RNA polymerase II"/>
    <property type="evidence" value="ECO:0007669"/>
    <property type="project" value="InterPro"/>
</dbReference>
<dbReference type="CDD" id="cd00183">
    <property type="entry name" value="TFIIS_I"/>
    <property type="match status" value="1"/>
</dbReference>
<dbReference type="FunFam" id="1.20.930.10:FF:000010">
    <property type="entry name" value="elongin-A isoform X1"/>
    <property type="match status" value="1"/>
</dbReference>
<dbReference type="Gene3D" id="6.10.250.3180">
    <property type="match status" value="1"/>
</dbReference>
<dbReference type="Gene3D" id="1.20.930.10">
    <property type="entry name" value="Conserved domain common to transcription factors TFIIS, elongin A, CRSP70"/>
    <property type="match status" value="1"/>
</dbReference>
<dbReference type="InterPro" id="IPR051870">
    <property type="entry name" value="Elongin-A_domain"/>
</dbReference>
<dbReference type="InterPro" id="IPR010684">
    <property type="entry name" value="RNA_pol_II_trans_fac_SIII_A"/>
</dbReference>
<dbReference type="InterPro" id="IPR003617">
    <property type="entry name" value="TFIIS/CRSP70_N_sub"/>
</dbReference>
<dbReference type="InterPro" id="IPR035441">
    <property type="entry name" value="TFIIS/LEDGF_dom_sf"/>
</dbReference>
<dbReference type="InterPro" id="IPR017923">
    <property type="entry name" value="TFIIS_N"/>
</dbReference>
<dbReference type="PANTHER" id="PTHR15141:SF7">
    <property type="entry name" value="ELONGIN-A2"/>
    <property type="match status" value="1"/>
</dbReference>
<dbReference type="PANTHER" id="PTHR15141">
    <property type="entry name" value="TRANSCRIPTION ELONGATION FACTOR B POLYPEPTIDE 3"/>
    <property type="match status" value="1"/>
</dbReference>
<dbReference type="Pfam" id="PF06881">
    <property type="entry name" value="Elongin_A"/>
    <property type="match status" value="1"/>
</dbReference>
<dbReference type="Pfam" id="PF08711">
    <property type="entry name" value="Med26"/>
    <property type="match status" value="1"/>
</dbReference>
<dbReference type="SMART" id="SM00509">
    <property type="entry name" value="TFS2N"/>
    <property type="match status" value="1"/>
</dbReference>
<dbReference type="SUPFAM" id="SSF47676">
    <property type="entry name" value="Conserved domain common to transcription factors TFIIS, elongin A, CRSP70"/>
    <property type="match status" value="1"/>
</dbReference>
<dbReference type="PROSITE" id="PS51319">
    <property type="entry name" value="TFIIS_N"/>
    <property type="match status" value="1"/>
</dbReference>
<comment type="function">
    <text evidence="5">SIII, also known as elongin, is a general transcription elongation factor that increases the RNA polymerase II transcription elongation past template-encoded arresting sites. Subunit A2 is transcriptionally active but its transcription activity is not enhanced by binding to the dimeric complex of the SIII regulatory subunits B and C (elongin BC complex).</text>
</comment>
<comment type="subunit">
    <text evidence="5">Heterotrimer of an A (ELOA, ELOA2 or ELOA3P), ELOB and ELOC subunit.</text>
</comment>
<comment type="interaction">
    <interactant intactId="EBI-741705">
        <id>Q8IYF1</id>
    </interactant>
    <interactant intactId="EBI-11985957">
        <id>O14647-3</id>
        <label>CHD2</label>
    </interactant>
    <organismsDiffer>false</organismsDiffer>
    <experiments>3</experiments>
</comment>
<comment type="interaction">
    <interactant intactId="EBI-741705">
        <id>Q8IYF1</id>
    </interactant>
    <interactant intactId="EBI-7116203">
        <id>O75031</id>
        <label>HSF2BP</label>
    </interactant>
    <organismsDiffer>false</organismsDiffer>
    <experiments>5</experiments>
</comment>
<comment type="interaction">
    <interactant intactId="EBI-741705">
        <id>Q8IYF1</id>
    </interactant>
    <interactant intactId="EBI-3920396">
        <id>Q6ZUT1</id>
        <label>NKAPD1</label>
    </interactant>
    <organismsDiffer>false</organismsDiffer>
    <experiments>3</experiments>
</comment>
<comment type="interaction">
    <interactant intactId="EBI-741705">
        <id>Q8IYF1</id>
    </interactant>
    <interactant intactId="EBI-395959">
        <id>Q15287</id>
        <label>RNPS1</label>
    </interactant>
    <organismsDiffer>false</organismsDiffer>
    <experiments>3</experiments>
</comment>
<comment type="interaction">
    <interactant intactId="EBI-741705">
        <id>Q8IYF1</id>
    </interactant>
    <interactant intactId="EBI-10268630">
        <id>Q8N9Q2</id>
        <label>SREK1IP1</label>
    </interactant>
    <organismsDiffer>false</organismsDiffer>
    <experiments>3</experiments>
</comment>
<comment type="interaction">
    <interactant intactId="EBI-741705">
        <id>Q8IYF1</id>
    </interactant>
    <interactant intactId="EBI-12157263">
        <id>P40337-2</id>
        <label>VHL</label>
    </interactant>
    <organismsDiffer>false</organismsDiffer>
    <experiments>3</experiments>
</comment>
<comment type="interaction">
    <interactant intactId="EBI-741705">
        <id>Q8IYF1</id>
    </interactant>
    <interactant intactId="EBI-597063">
        <id>Q8TBK6</id>
        <label>ZCCHC10</label>
    </interactant>
    <organismsDiffer>false</organismsDiffer>
    <experiments>3</experiments>
</comment>
<comment type="interaction">
    <interactant intactId="EBI-741705">
        <id>Q8IYF1</id>
    </interactant>
    <interactant intactId="EBI-10746567">
        <id>P52744</id>
        <label>ZNF138</label>
    </interactant>
    <organismsDiffer>false</organismsDiffer>
    <experiments>3</experiments>
</comment>
<comment type="interaction">
    <interactant intactId="EBI-741705">
        <id>Q8IYF1</id>
    </interactant>
    <interactant intactId="EBI-5657766">
        <id>P17027</id>
        <label>ZNF23</label>
    </interactant>
    <organismsDiffer>false</organismsDiffer>
    <experiments>3</experiments>
</comment>
<comment type="subcellular location">
    <subcellularLocation>
        <location evidence="7">Nucleus</location>
    </subcellularLocation>
</comment>
<comment type="tissue specificity">
    <text evidence="5">Specifically expressed in testis.</text>
</comment>
<comment type="domain">
    <text evidence="2">The BC-box, which mediates binding to the elongin BC complex, has the consensus sequence [APST]-L-x(3)-C-x(3)-[AILV].</text>
</comment>
<sequence length="753" mass="83921">MAAGSTTLHAVEKLQVRLATKTEPKKLEKYLQKLSALPMTADILAETGIRKTVKRLRKHQHVGDFARDLAARWKKLVLVDRNTRPGPQDPEESASRQRFGEALQDQEKAWGFPENATAPRSPSHSPEHRRTARRTPPGQQRPHPRSHSREPRAERKCPRIAPADSGRYRASPTRTAPLRMPEGPEPAAPGKQPGRGHTHAAQGGPLLCPGCQGQPQGKAVVSHSKGHKSSRQEKRPLCAQGDWHSPTLIREKSCGACLREETPRMPSWASARDRQPSDFKTDKEGGQAGSGQRVPALEEAPDSHQKRPQHSHSNKKRPSLDGRDPGNGTHGLSPEEKEQLSNDRETQEGKPPTAHLDRTSVSSLSEVEEVDMAEEFEQPTLSCEKYLTYDQLRKQKKKTGKSATTALGDKQRKANESKGTRESWDSAKKLPPVQESQSERLQAAGADSAGPKTVPSHVFSELWDLSEAWMQANYDPLSDSDSMTSQAKPEALSSPKFREEAAFPGRRVNAKMPVYSGSRPACQLQVPTLRQQCAQVLRNNPDALSDVGEVPYWVLEPVLEGWRPDQLYRRKKDNHALVRETDELRRNHCFQDFKEEKPQENKTWREQYLRLPDAPEQRLRVMTTNIRSARGNNPNGREAKMICFKSVAKTPYDTSRRQEKSAGDADPENGEIKPASKPAGSSHTPSSQSSSGGGRDSSSSILRWLPEKRANPCLSSSNEHAAPAAKTRKQAAKKVAPLMAKAIRDYKRRFSRR</sequence>
<evidence type="ECO:0000250" key="1"/>
<evidence type="ECO:0000250" key="2">
    <source>
        <dbReference type="UniProtKB" id="Q63187"/>
    </source>
</evidence>
<evidence type="ECO:0000255" key="3">
    <source>
        <dbReference type="PROSITE-ProRule" id="PRU00649"/>
    </source>
</evidence>
<evidence type="ECO:0000256" key="4">
    <source>
        <dbReference type="SAM" id="MobiDB-lite"/>
    </source>
</evidence>
<evidence type="ECO:0000269" key="5">
    <source>
    </source>
</evidence>
<evidence type="ECO:0000269" key="6">
    <source>
    </source>
</evidence>
<evidence type="ECO:0000305" key="7"/>
<evidence type="ECO:0000312" key="8">
    <source>
        <dbReference type="HGNC" id="HGNC:30771"/>
    </source>
</evidence>
<protein>
    <recommendedName>
        <fullName>Elongin-A2</fullName>
        <shortName>EloA2</shortName>
    </recommendedName>
    <alternativeName>
        <fullName>RNA polymerase II transcription factor SIII subunit A2</fullName>
    </alternativeName>
    <alternativeName>
        <fullName>Transcription elongation factor B polypeptide 3B</fullName>
    </alternativeName>
</protein>
<keyword id="KW-0539">Nucleus</keyword>
<keyword id="KW-1185">Reference proteome</keyword>
<keyword id="KW-0804">Transcription</keyword>
<keyword id="KW-0805">Transcription regulation</keyword>
<proteinExistence type="evidence at protein level"/>
<gene>
    <name evidence="8" type="primary">ELOA2</name>
    <name type="synonym">TCEB3B</name>
    <name type="synonym">TCEB3L</name>
</gene>
<feature type="chain" id="PRO_0000086963" description="Elongin-A2">
    <location>
        <begin position="1"/>
        <end position="753"/>
    </location>
</feature>
<feature type="domain" description="TFIIS N-terminal" evidence="3">
    <location>
        <begin position="5"/>
        <end position="80"/>
    </location>
</feature>
<feature type="region of interest" description="Disordered" evidence="4">
    <location>
        <begin position="80"/>
        <end position="245"/>
    </location>
</feature>
<feature type="region of interest" description="Disordered" evidence="4">
    <location>
        <begin position="261"/>
        <end position="453"/>
    </location>
</feature>
<feature type="region of interest" description="Disordered" evidence="4">
    <location>
        <begin position="477"/>
        <end position="497"/>
    </location>
</feature>
<feature type="region of interest" description="Activation domain" evidence="1">
    <location>
        <begin position="500"/>
        <end position="659"/>
    </location>
</feature>
<feature type="region of interest" description="BC-box" evidence="2">
    <location>
        <begin position="528"/>
        <end position="537"/>
    </location>
</feature>
<feature type="region of interest" description="Interacting with Elongin BC complex" evidence="1">
    <location>
        <begin position="528"/>
        <end position="537"/>
    </location>
</feature>
<feature type="region of interest" description="Disordered" evidence="4">
    <location>
        <begin position="650"/>
        <end position="735"/>
    </location>
</feature>
<feature type="compositionally biased region" description="Basic and acidic residues" evidence="4">
    <location>
        <begin position="147"/>
        <end position="157"/>
    </location>
</feature>
<feature type="compositionally biased region" description="Basic and acidic residues" evidence="4">
    <location>
        <begin position="271"/>
        <end position="285"/>
    </location>
</feature>
<feature type="compositionally biased region" description="Basic residues" evidence="4">
    <location>
        <begin position="306"/>
        <end position="317"/>
    </location>
</feature>
<feature type="compositionally biased region" description="Basic and acidic residues" evidence="4">
    <location>
        <begin position="333"/>
        <end position="348"/>
    </location>
</feature>
<feature type="compositionally biased region" description="Acidic residues" evidence="4">
    <location>
        <begin position="366"/>
        <end position="377"/>
    </location>
</feature>
<feature type="compositionally biased region" description="Basic and acidic residues" evidence="4">
    <location>
        <begin position="409"/>
        <end position="428"/>
    </location>
</feature>
<feature type="compositionally biased region" description="Basic and acidic residues" evidence="4">
    <location>
        <begin position="654"/>
        <end position="663"/>
    </location>
</feature>
<feature type="compositionally biased region" description="Low complexity" evidence="4">
    <location>
        <begin position="680"/>
        <end position="700"/>
    </location>
</feature>
<feature type="sequence variant" id="VAR_050965" description="In dbSNP:rs2571028." evidence="5">
    <original>R</original>
    <variation>P</variation>
    <location>
        <position position="179"/>
    </location>
</feature>
<feature type="sequence variant" id="VAR_050966" description="In dbSNP:rs2010834." evidence="5">
    <original>C</original>
    <variation>F</variation>
    <location>
        <position position="254"/>
    </location>
</feature>
<feature type="sequence variant" id="VAR_050967" description="In dbSNP:rs892586." evidence="5">
    <original>A</original>
    <variation>S</variation>
    <location>
        <position position="403"/>
    </location>
</feature>
<feature type="sequence variant" id="VAR_061646" description="In dbSNP:rs3744863." evidence="5">
    <original>A</original>
    <variation>T</variation>
    <location>
        <position position="446"/>
    </location>
</feature>
<feature type="sequence variant" id="VAR_035914" description="In a colorectal cancer sample; somatic mutation; dbSNP:rs138369139." evidence="6">
    <original>R</original>
    <variation>Q</variation>
    <location>
        <position position="498"/>
    </location>
</feature>
<feature type="sequence conflict" description="In Ref. 1; BAA90665." evidence="7" ref="1">
    <original>R</original>
    <variation>L</variation>
    <location>
        <position position="55"/>
    </location>
</feature>
<feature type="sequence conflict" description="In Ref. 1; BAA90665." evidence="7" ref="1">
    <original>P</original>
    <variation>L</variation>
    <location>
        <position position="236"/>
    </location>
</feature>
<feature type="sequence conflict" description="In Ref. 2; AAH36022." evidence="7" ref="2">
    <original>S</original>
    <variation>N</variation>
    <location>
        <position position="456"/>
    </location>
</feature>